<name>T184C_RAT</name>
<sequence length="503" mass="57917">MPCACNRNNWRKWIRPLLILLYALAILVTVPVCIWEFQKLKVGIHTKVWFIAGIFLLLTIPVSMCGILQHLVHYTQPELQKPIIRILWMVPIYSLDSWVALKYPKIAIYVDTWRECYEAYVIYNFMIFLTNYLTIRFPNLMLHLEAKDQQNHLPPLCCCPPWAMGEMLLFRCKLGVLQYTVVRPITTVTSLVCEILGVYDEGNFSFSNAWTYLVILNNLSQLFAMYCLLLFYKVLKEELSPIQPVGKFLCVKLVVFVSFWQAVLIALLVKVGVISEKRTWEWQSAEAVATGLQDFIICIEMFFAAIAHHYTFSYKPYVHEAEEGPCFDSFLAMWDVSDIREDISEQVRRVGRTMRGYPKKKCFPGDPDHNEHSSLLSASSQDSSKPSSPVGLYQGFGQTITSQSPISIANLYEEILNEIPEEQQRLYSGQDITMDIPEEQPRHDTGQDVVHLPYRQELPYKNHYQDHIQTVTSRYLLSSPKPSDDIVIDFSDSPEGSDSSTDS</sequence>
<comment type="function">
    <text evidence="1">Possible tumor suppressor which may play a role in cell growth.</text>
</comment>
<comment type="subcellular location">
    <subcellularLocation>
        <location evidence="4">Membrane</location>
        <topology evidence="4">Multi-pass membrane protein</topology>
    </subcellularLocation>
</comment>
<comment type="similarity">
    <text evidence="4">Belongs to the TMEM184 family.</text>
</comment>
<proteinExistence type="evidence at transcript level"/>
<dbReference type="EMBL" id="AY228474">
    <property type="protein sequence ID" value="AAO73557.1"/>
    <property type="molecule type" value="mRNA"/>
</dbReference>
<dbReference type="EMBL" id="BC089112">
    <property type="protein sequence ID" value="AAH89112.1"/>
    <property type="molecule type" value="mRNA"/>
</dbReference>
<dbReference type="RefSeq" id="NP_847900.1">
    <property type="nucleotide sequence ID" value="NM_178330.1"/>
</dbReference>
<dbReference type="FunCoup" id="Q810F5">
    <property type="interactions" value="2483"/>
</dbReference>
<dbReference type="STRING" id="10116.ENSRNOP00000017225"/>
<dbReference type="PhosphoSitePlus" id="Q810F5"/>
<dbReference type="PaxDb" id="10116-ENSRNOP00000017225"/>
<dbReference type="GeneID" id="291946"/>
<dbReference type="KEGG" id="rno:291946"/>
<dbReference type="UCSC" id="RGD:727852">
    <property type="organism name" value="rat"/>
</dbReference>
<dbReference type="AGR" id="RGD:727852"/>
<dbReference type="CTD" id="55751"/>
<dbReference type="RGD" id="727852">
    <property type="gene designation" value="Tmem184c"/>
</dbReference>
<dbReference type="VEuPathDB" id="HostDB:ENSRNOG00000012860"/>
<dbReference type="eggNOG" id="KOG2641">
    <property type="taxonomic scope" value="Eukaryota"/>
</dbReference>
<dbReference type="HOGENOM" id="CLU_012923_1_1_1"/>
<dbReference type="InParanoid" id="Q810F5"/>
<dbReference type="OrthoDB" id="5348404at2759"/>
<dbReference type="PhylomeDB" id="Q810F5"/>
<dbReference type="TreeFam" id="TF324245"/>
<dbReference type="PRO" id="PR:Q810F5"/>
<dbReference type="Proteomes" id="UP000002494">
    <property type="component" value="Chromosome 19"/>
</dbReference>
<dbReference type="Bgee" id="ENSRNOG00000012860">
    <property type="expression patterns" value="Expressed in ovary and 19 other cell types or tissues"/>
</dbReference>
<dbReference type="GO" id="GO:0016020">
    <property type="term" value="C:membrane"/>
    <property type="evidence" value="ECO:0000318"/>
    <property type="project" value="GO_Central"/>
</dbReference>
<dbReference type="GO" id="GO:0022857">
    <property type="term" value="F:transmembrane transporter activity"/>
    <property type="evidence" value="ECO:0000318"/>
    <property type="project" value="GO_Central"/>
</dbReference>
<dbReference type="InterPro" id="IPR005178">
    <property type="entry name" value="Ostalpha/TMEM184C"/>
</dbReference>
<dbReference type="PANTHER" id="PTHR23423">
    <property type="entry name" value="ORGANIC SOLUTE TRANSPORTER-RELATED"/>
    <property type="match status" value="1"/>
</dbReference>
<dbReference type="Pfam" id="PF03619">
    <property type="entry name" value="Solute_trans_a"/>
    <property type="match status" value="1"/>
</dbReference>
<dbReference type="SMART" id="SM01417">
    <property type="entry name" value="Solute_trans_a"/>
    <property type="match status" value="1"/>
</dbReference>
<accession>Q810F5</accession>
<protein>
    <recommendedName>
        <fullName>Transmembrane protein 184C</fullName>
    </recommendedName>
    <alternativeName>
        <fullName>Transmembrane protein 34</fullName>
    </alternativeName>
</protein>
<feature type="chain" id="PRO_0000287570" description="Transmembrane protein 184C">
    <location>
        <begin position="1"/>
        <end position="503"/>
    </location>
</feature>
<feature type="transmembrane region" description="Helical" evidence="2">
    <location>
        <begin position="17"/>
        <end position="37"/>
    </location>
</feature>
<feature type="transmembrane region" description="Helical" evidence="2">
    <location>
        <begin position="48"/>
        <end position="68"/>
    </location>
</feature>
<feature type="transmembrane region" description="Helical" evidence="2">
    <location>
        <begin position="83"/>
        <end position="103"/>
    </location>
</feature>
<feature type="transmembrane region" description="Helical" evidence="2">
    <location>
        <begin position="115"/>
        <end position="135"/>
    </location>
</feature>
<feature type="transmembrane region" description="Helical" evidence="2">
    <location>
        <begin position="212"/>
        <end position="232"/>
    </location>
</feature>
<feature type="transmembrane region" description="Helical" evidence="2">
    <location>
        <begin position="254"/>
        <end position="274"/>
    </location>
</feature>
<feature type="transmembrane region" description="Helical" evidence="2">
    <location>
        <begin position="287"/>
        <end position="307"/>
    </location>
</feature>
<feature type="region of interest" description="Disordered" evidence="3">
    <location>
        <begin position="358"/>
        <end position="391"/>
    </location>
</feature>
<feature type="region of interest" description="Disordered" evidence="3">
    <location>
        <begin position="479"/>
        <end position="503"/>
    </location>
</feature>
<feature type="compositionally biased region" description="Low complexity" evidence="3">
    <location>
        <begin position="373"/>
        <end position="388"/>
    </location>
</feature>
<feature type="compositionally biased region" description="Polar residues" evidence="3">
    <location>
        <begin position="494"/>
        <end position="503"/>
    </location>
</feature>
<evidence type="ECO:0000250" key="1"/>
<evidence type="ECO:0000255" key="2"/>
<evidence type="ECO:0000256" key="3">
    <source>
        <dbReference type="SAM" id="MobiDB-lite"/>
    </source>
</evidence>
<evidence type="ECO:0000305" key="4"/>
<gene>
    <name type="primary">Tmem184c</name>
    <name type="synonym">Tmem34</name>
</gene>
<keyword id="KW-0472">Membrane</keyword>
<keyword id="KW-1185">Reference proteome</keyword>
<keyword id="KW-0812">Transmembrane</keyword>
<keyword id="KW-1133">Transmembrane helix</keyword>
<organism>
    <name type="scientific">Rattus norvegicus</name>
    <name type="common">Rat</name>
    <dbReference type="NCBI Taxonomy" id="10116"/>
    <lineage>
        <taxon>Eukaryota</taxon>
        <taxon>Metazoa</taxon>
        <taxon>Chordata</taxon>
        <taxon>Craniata</taxon>
        <taxon>Vertebrata</taxon>
        <taxon>Euteleostomi</taxon>
        <taxon>Mammalia</taxon>
        <taxon>Eutheria</taxon>
        <taxon>Euarchontoglires</taxon>
        <taxon>Glires</taxon>
        <taxon>Rodentia</taxon>
        <taxon>Myomorpha</taxon>
        <taxon>Muroidea</taxon>
        <taxon>Muridae</taxon>
        <taxon>Murinae</taxon>
        <taxon>Rattus</taxon>
    </lineage>
</organism>
<reference key="1">
    <citation type="submission" date="2003-02" db="EMBL/GenBank/DDBJ databases">
        <title>Novel genes in rat bone marrow.</title>
        <authorList>
            <person name="Buki K.G."/>
            <person name="Vaananen K."/>
        </authorList>
    </citation>
    <scope>NUCLEOTIDE SEQUENCE [MRNA]</scope>
    <source>
        <strain>Wistar</strain>
        <tissue>Bone marrow</tissue>
    </source>
</reference>
<reference key="2">
    <citation type="journal article" date="2004" name="Genome Res.">
        <title>The status, quality, and expansion of the NIH full-length cDNA project: the Mammalian Gene Collection (MGC).</title>
        <authorList>
            <consortium name="The MGC Project Team"/>
        </authorList>
    </citation>
    <scope>NUCLEOTIDE SEQUENCE [LARGE SCALE MRNA]</scope>
    <source>
        <tissue>Brain</tissue>
    </source>
</reference>